<dbReference type="EMBL" id="AL596168">
    <property type="protein sequence ID" value="CAC96589.1"/>
    <property type="molecule type" value="Genomic_DNA"/>
</dbReference>
<dbReference type="PIR" id="AE1602">
    <property type="entry name" value="AE1602"/>
</dbReference>
<dbReference type="RefSeq" id="WP_003762048.1">
    <property type="nucleotide sequence ID" value="NC_003212.1"/>
</dbReference>
<dbReference type="SMR" id="Q92C33"/>
<dbReference type="STRING" id="272626.gene:17565689"/>
<dbReference type="GeneID" id="93234738"/>
<dbReference type="KEGG" id="lin:lin1358"/>
<dbReference type="eggNOG" id="COG0779">
    <property type="taxonomic scope" value="Bacteria"/>
</dbReference>
<dbReference type="HOGENOM" id="CLU_070525_2_0_9"/>
<dbReference type="OrthoDB" id="9805006at2"/>
<dbReference type="Proteomes" id="UP000002513">
    <property type="component" value="Chromosome"/>
</dbReference>
<dbReference type="GO" id="GO:0005829">
    <property type="term" value="C:cytosol"/>
    <property type="evidence" value="ECO:0007669"/>
    <property type="project" value="TreeGrafter"/>
</dbReference>
<dbReference type="GO" id="GO:0000028">
    <property type="term" value="P:ribosomal small subunit assembly"/>
    <property type="evidence" value="ECO:0007669"/>
    <property type="project" value="TreeGrafter"/>
</dbReference>
<dbReference type="GO" id="GO:0006412">
    <property type="term" value="P:translation"/>
    <property type="evidence" value="ECO:0007669"/>
    <property type="project" value="TreeGrafter"/>
</dbReference>
<dbReference type="CDD" id="cd01734">
    <property type="entry name" value="YlxS_C"/>
    <property type="match status" value="1"/>
</dbReference>
<dbReference type="FunFam" id="2.30.30.180:FF:000002">
    <property type="entry name" value="Ribosome maturation factor RimP"/>
    <property type="match status" value="1"/>
</dbReference>
<dbReference type="FunFam" id="3.30.300.70:FF:000001">
    <property type="entry name" value="Ribosome maturation factor RimP"/>
    <property type="match status" value="1"/>
</dbReference>
<dbReference type="Gene3D" id="2.30.30.180">
    <property type="entry name" value="Ribosome maturation factor RimP, C-terminal domain"/>
    <property type="match status" value="1"/>
</dbReference>
<dbReference type="Gene3D" id="3.30.300.70">
    <property type="entry name" value="RimP-like superfamily, N-terminal"/>
    <property type="match status" value="1"/>
</dbReference>
<dbReference type="HAMAP" id="MF_01077">
    <property type="entry name" value="RimP"/>
    <property type="match status" value="1"/>
</dbReference>
<dbReference type="InterPro" id="IPR003728">
    <property type="entry name" value="Ribosome_maturation_RimP"/>
</dbReference>
<dbReference type="InterPro" id="IPR028998">
    <property type="entry name" value="RimP_C"/>
</dbReference>
<dbReference type="InterPro" id="IPR036847">
    <property type="entry name" value="RimP_C_sf"/>
</dbReference>
<dbReference type="InterPro" id="IPR028989">
    <property type="entry name" value="RimP_N"/>
</dbReference>
<dbReference type="InterPro" id="IPR035956">
    <property type="entry name" value="RimP_N_sf"/>
</dbReference>
<dbReference type="NCBIfam" id="NF000928">
    <property type="entry name" value="PRK00092.1-2"/>
    <property type="match status" value="1"/>
</dbReference>
<dbReference type="PANTHER" id="PTHR33867">
    <property type="entry name" value="RIBOSOME MATURATION FACTOR RIMP"/>
    <property type="match status" value="1"/>
</dbReference>
<dbReference type="PANTHER" id="PTHR33867:SF1">
    <property type="entry name" value="RIBOSOME MATURATION FACTOR RIMP"/>
    <property type="match status" value="1"/>
</dbReference>
<dbReference type="Pfam" id="PF17384">
    <property type="entry name" value="DUF150_C"/>
    <property type="match status" value="1"/>
</dbReference>
<dbReference type="Pfam" id="PF02576">
    <property type="entry name" value="RimP_N"/>
    <property type="match status" value="1"/>
</dbReference>
<dbReference type="SUPFAM" id="SSF74942">
    <property type="entry name" value="YhbC-like, C-terminal domain"/>
    <property type="match status" value="1"/>
</dbReference>
<dbReference type="SUPFAM" id="SSF75420">
    <property type="entry name" value="YhbC-like, N-terminal domain"/>
    <property type="match status" value="1"/>
</dbReference>
<reference key="1">
    <citation type="journal article" date="2001" name="Science">
        <title>Comparative genomics of Listeria species.</title>
        <authorList>
            <person name="Glaser P."/>
            <person name="Frangeul L."/>
            <person name="Buchrieser C."/>
            <person name="Rusniok C."/>
            <person name="Amend A."/>
            <person name="Baquero F."/>
            <person name="Berche P."/>
            <person name="Bloecker H."/>
            <person name="Brandt P."/>
            <person name="Chakraborty T."/>
            <person name="Charbit A."/>
            <person name="Chetouani F."/>
            <person name="Couve E."/>
            <person name="de Daruvar A."/>
            <person name="Dehoux P."/>
            <person name="Domann E."/>
            <person name="Dominguez-Bernal G."/>
            <person name="Duchaud E."/>
            <person name="Durant L."/>
            <person name="Dussurget O."/>
            <person name="Entian K.-D."/>
            <person name="Fsihi H."/>
            <person name="Garcia-del Portillo F."/>
            <person name="Garrido P."/>
            <person name="Gautier L."/>
            <person name="Goebel W."/>
            <person name="Gomez-Lopez N."/>
            <person name="Hain T."/>
            <person name="Hauf J."/>
            <person name="Jackson D."/>
            <person name="Jones L.-M."/>
            <person name="Kaerst U."/>
            <person name="Kreft J."/>
            <person name="Kuhn M."/>
            <person name="Kunst F."/>
            <person name="Kurapkat G."/>
            <person name="Madueno E."/>
            <person name="Maitournam A."/>
            <person name="Mata Vicente J."/>
            <person name="Ng E."/>
            <person name="Nedjari H."/>
            <person name="Nordsiek G."/>
            <person name="Novella S."/>
            <person name="de Pablos B."/>
            <person name="Perez-Diaz J.-C."/>
            <person name="Purcell R."/>
            <person name="Remmel B."/>
            <person name="Rose M."/>
            <person name="Schlueter T."/>
            <person name="Simoes N."/>
            <person name="Tierrez A."/>
            <person name="Vazquez-Boland J.-A."/>
            <person name="Voss H."/>
            <person name="Wehland J."/>
            <person name="Cossart P."/>
        </authorList>
    </citation>
    <scope>NUCLEOTIDE SEQUENCE [LARGE SCALE GENOMIC DNA]</scope>
    <source>
        <strain>ATCC BAA-680 / CLIP 11262</strain>
    </source>
</reference>
<keyword id="KW-0963">Cytoplasm</keyword>
<keyword id="KW-0690">Ribosome biogenesis</keyword>
<name>RIMP_LISIN</name>
<comment type="function">
    <text evidence="1">Required for maturation of 30S ribosomal subunits.</text>
</comment>
<comment type="subcellular location">
    <subcellularLocation>
        <location evidence="1">Cytoplasm</location>
    </subcellularLocation>
</comment>
<comment type="similarity">
    <text evidence="1">Belongs to the RimP family.</text>
</comment>
<protein>
    <recommendedName>
        <fullName evidence="1">Ribosome maturation factor RimP</fullName>
    </recommendedName>
</protein>
<accession>Q92C33</accession>
<evidence type="ECO:0000255" key="1">
    <source>
        <dbReference type="HAMAP-Rule" id="MF_01077"/>
    </source>
</evidence>
<proteinExistence type="inferred from homology"/>
<gene>
    <name evidence="1" type="primary">rimP</name>
    <name type="ordered locus">lin1358</name>
</gene>
<sequence>MSKVLEQVEAIVAPITDELQLELVDIAFEKEGPNWFLRIFIDKDGGVDIDECAAVSEKVSEKMDESDPITQNYFLEVSSPGAERPLKKEQDFENAVGKYVHVTSYEPIDGRKMWEGTLVSYDGTTLVITITDKTRKITCEIPKDKVAKARLAIQF</sequence>
<organism>
    <name type="scientific">Listeria innocua serovar 6a (strain ATCC BAA-680 / CLIP 11262)</name>
    <dbReference type="NCBI Taxonomy" id="272626"/>
    <lineage>
        <taxon>Bacteria</taxon>
        <taxon>Bacillati</taxon>
        <taxon>Bacillota</taxon>
        <taxon>Bacilli</taxon>
        <taxon>Bacillales</taxon>
        <taxon>Listeriaceae</taxon>
        <taxon>Listeria</taxon>
    </lineage>
</organism>
<feature type="chain" id="PRO_0000181885" description="Ribosome maturation factor RimP">
    <location>
        <begin position="1"/>
        <end position="155"/>
    </location>
</feature>